<evidence type="ECO:0000250" key="1">
    <source>
        <dbReference type="UniProtKB" id="P22610"/>
    </source>
</evidence>
<evidence type="ECO:0000255" key="2"/>
<evidence type="ECO:0000305" key="3"/>
<feature type="chain" id="PRO_0000289862" description="Prepilin leader peptidase/N-methyltransferase">
    <location>
        <begin position="1"/>
        <end position="291"/>
    </location>
</feature>
<feature type="transmembrane region" description="Helical" evidence="2">
    <location>
        <begin position="14"/>
        <end position="34"/>
    </location>
</feature>
<feature type="transmembrane region" description="Helical" evidence="2">
    <location>
        <begin position="107"/>
        <end position="127"/>
    </location>
</feature>
<feature type="transmembrane region" description="Helical" evidence="2">
    <location>
        <begin position="131"/>
        <end position="151"/>
    </location>
</feature>
<feature type="transmembrane region" description="Helical" evidence="2">
    <location>
        <begin position="162"/>
        <end position="182"/>
    </location>
</feature>
<feature type="transmembrane region" description="Helical" evidence="2">
    <location>
        <begin position="186"/>
        <end position="206"/>
    </location>
</feature>
<feature type="transmembrane region" description="Helical" evidence="2">
    <location>
        <begin position="232"/>
        <end position="252"/>
    </location>
</feature>
<feature type="transmembrane region" description="Helical" evidence="2">
    <location>
        <begin position="262"/>
        <end position="282"/>
    </location>
</feature>
<feature type="binding site" evidence="1">
    <location>
        <position position="75"/>
    </location>
    <ligand>
        <name>Zn(2+)</name>
        <dbReference type="ChEBI" id="CHEBI:29105"/>
    </ligand>
</feature>
<feature type="binding site" evidence="1">
    <location>
        <position position="78"/>
    </location>
    <ligand>
        <name>Zn(2+)</name>
        <dbReference type="ChEBI" id="CHEBI:29105"/>
    </ligand>
</feature>
<feature type="binding site" evidence="1">
    <location>
        <position position="100"/>
    </location>
    <ligand>
        <name>Zn(2+)</name>
        <dbReference type="ChEBI" id="CHEBI:29105"/>
    </ligand>
</feature>
<feature type="binding site" evidence="1">
    <location>
        <position position="103"/>
    </location>
    <ligand>
        <name>Zn(2+)</name>
        <dbReference type="ChEBI" id="CHEBI:29105"/>
    </ligand>
</feature>
<feature type="sequence conflict" description="In Ref. 1; AAC04561." evidence="3" ref="1">
    <original>P</original>
    <variation>A</variation>
    <location>
        <position position="60"/>
    </location>
</feature>
<feature type="sequence conflict" description="In Ref. 1; AAC04561." evidence="3" ref="1">
    <original>A</original>
    <variation>G</variation>
    <location>
        <position position="84"/>
    </location>
</feature>
<feature type="sequence conflict" description="In Ref. 1; AAC04561." evidence="3" ref="1">
    <original>C</original>
    <variation>W</variation>
    <location>
        <position position="100"/>
    </location>
</feature>
<feature type="sequence conflict" description="In Ref. 1; AAC04561." evidence="3" ref="1">
    <original>C</original>
    <variation>W</variation>
    <location>
        <position position="103"/>
    </location>
</feature>
<feature type="sequence conflict" description="In Ref. 1; AAC04561." evidence="3" ref="1">
    <original>A</original>
    <variation>G</variation>
    <location>
        <position position="126"/>
    </location>
</feature>
<feature type="sequence conflict" description="In Ref. 1; AAC04561." evidence="3" ref="1">
    <original>T</original>
    <variation>N</variation>
    <location>
        <position position="163"/>
    </location>
</feature>
<feature type="sequence conflict" description="In Ref. 1; AAC04561." evidence="3" ref="1">
    <original>S</original>
    <variation>R</variation>
    <location>
        <position position="198"/>
    </location>
</feature>
<feature type="sequence conflict" description="In Ref. 1; AAC04561." evidence="3" ref="1">
    <original>L</original>
    <variation>V</variation>
    <location>
        <position position="253"/>
    </location>
</feature>
<reference key="1">
    <citation type="submission" date="1997-03" db="EMBL/GenBank/DDBJ databases">
        <title>Aeromonas salmonicida pilD gene.</title>
        <authorList>
            <person name="Lutwyche P."/>
            <person name="Perez-Casal J.F."/>
            <person name="Crump E.M."/>
            <person name="Trust T.J."/>
        </authorList>
    </citation>
    <scope>NUCLEOTIDE SEQUENCE [GENOMIC DNA]</scope>
</reference>
<reference key="2">
    <citation type="submission" date="2006-02" db="EMBL/GenBank/DDBJ databases">
        <title>Characterization of three type IV pili of Aeromonas salmonicida subsp. salmonicida A449.</title>
        <authorList>
            <person name="Boyd J.M."/>
            <person name="Knickle L."/>
            <person name="Touhami A."/>
            <person name="Dacanay A."/>
            <person name="Jericho M."/>
            <person name="Reith M."/>
        </authorList>
    </citation>
    <scope>NUCLEOTIDE SEQUENCE [GENOMIC DNA]</scope>
</reference>
<reference key="3">
    <citation type="journal article" date="2008" name="BMC Genomics">
        <title>The genome of Aeromonas salmonicida subsp. salmonicida A449: insights into the evolution of a fish pathogen.</title>
        <authorList>
            <person name="Reith M.E."/>
            <person name="Singh R.K."/>
            <person name="Curtis B."/>
            <person name="Boyd J.M."/>
            <person name="Bouevitch A."/>
            <person name="Kimball J."/>
            <person name="Munholland J."/>
            <person name="Murphy C."/>
            <person name="Sarty D."/>
            <person name="Williams J."/>
            <person name="Nash J.H."/>
            <person name="Johnson S.C."/>
            <person name="Brown L.L."/>
        </authorList>
    </citation>
    <scope>NUCLEOTIDE SEQUENCE [LARGE SCALE GENOMIC DNA]</scope>
    <source>
        <strain>A449</strain>
    </source>
</reference>
<proteinExistence type="inferred from homology"/>
<sequence>MTLLLELAHGLPWLYFSLVFLFSLMIGSFLNVVIHRLPIMLEREWQAEYRSYFSSDTPQPEDDERYNLMVPRSCCPRCNHPITALENIPLLSWLWLKGRCRGCQAAISARYPLVELLTALLSVVVAMTLTPGWGTLAALLLTWVLVALTFIDLDKMLLPDQLTLPLLWGGLLFNLLGGYVPLGDAVIGAMAGYLVLWSLYWAFKLLTGKEGMGYGDFKLLAALGAWLGWQALPIVLLLSSLVGAIFGIGLILLRNHHQSKPIPFGPYLAIAGWIALLWGDSITRWYLSTIL</sequence>
<comment type="function">
    <text evidence="1">Plays an essential role in type IV pili and type II pseudopili formation by proteolytically removing the leader sequence from substrate proteins and subsequently monomethylating the alpha-amino group of the newly exposed N-terminal phenylalanine.</text>
</comment>
<comment type="catalytic activity">
    <reaction evidence="1">
        <text>Typically cleaves a -Gly-|-Phe- bond to release an N-terminal, basic peptide of 5-8 residues from type IV prepilin, and then N-methylates the new N-terminal amino group, the methyl donor being S-adenosyl-L-methionine.</text>
        <dbReference type="EC" id="3.4.23.43"/>
    </reaction>
</comment>
<comment type="cofactor">
    <cofactor evidence="1">
        <name>Zn(2+)</name>
        <dbReference type="ChEBI" id="CHEBI:29105"/>
    </cofactor>
    <text evidence="1">Zinc is required for the N-terminal methylation of the mature pilin, but not for signal peptide cleavage.</text>
</comment>
<comment type="subcellular location">
    <subcellularLocation>
        <location evidence="1">Cell inner membrane</location>
        <topology evidence="1">Multi-pass membrane protein</topology>
    </subcellularLocation>
</comment>
<comment type="similarity">
    <text evidence="3">Belongs to the peptidase A24 family.</text>
</comment>
<name>LEP4_AERS4</name>
<keyword id="KW-0997">Cell inner membrane</keyword>
<keyword id="KW-1003">Cell membrane</keyword>
<keyword id="KW-0378">Hydrolase</keyword>
<keyword id="KW-0472">Membrane</keyword>
<keyword id="KW-0479">Metal-binding</keyword>
<keyword id="KW-0489">Methyltransferase</keyword>
<keyword id="KW-0511">Multifunctional enzyme</keyword>
<keyword id="KW-0645">Protease</keyword>
<keyword id="KW-0949">S-adenosyl-L-methionine</keyword>
<keyword id="KW-0808">Transferase</keyword>
<keyword id="KW-0812">Transmembrane</keyword>
<keyword id="KW-1133">Transmembrane helix</keyword>
<keyword id="KW-0862">Zinc</keyword>
<gene>
    <name type="primary">tapD</name>
    <name type="synonym">pilD</name>
    <name type="ordered locus">ASA_0411</name>
</gene>
<organism>
    <name type="scientific">Aeromonas salmonicida (strain A449)</name>
    <dbReference type="NCBI Taxonomy" id="382245"/>
    <lineage>
        <taxon>Bacteria</taxon>
        <taxon>Pseudomonadati</taxon>
        <taxon>Pseudomonadota</taxon>
        <taxon>Gammaproteobacteria</taxon>
        <taxon>Aeromonadales</taxon>
        <taxon>Aeromonadaceae</taxon>
        <taxon>Aeromonas</taxon>
    </lineage>
</organism>
<accession>A2T195</accession>
<accession>O54483</accession>
<accession>O68964</accession>
<protein>
    <recommendedName>
        <fullName>Prepilin leader peptidase/N-methyltransferase</fullName>
    </recommendedName>
    <domain>
        <recommendedName>
            <fullName>Leader peptidase</fullName>
            <ecNumber evidence="1">3.4.23.43</ecNumber>
        </recommendedName>
        <alternativeName>
            <fullName>Prepilin peptidase</fullName>
        </alternativeName>
    </domain>
    <domain>
        <recommendedName>
            <fullName>N-methyltransferase</fullName>
            <ecNumber evidence="1">2.1.1.-</ecNumber>
        </recommendedName>
    </domain>
</protein>
<dbReference type="EC" id="3.4.23.43" evidence="1"/>
<dbReference type="EC" id="2.1.1.-" evidence="1"/>
<dbReference type="EMBL" id="U95640">
    <property type="protein sequence ID" value="AAC04561.1"/>
    <property type="molecule type" value="Genomic_DNA"/>
</dbReference>
<dbReference type="EMBL" id="DQ396478">
    <property type="protein sequence ID" value="ABD57323.1"/>
    <property type="molecule type" value="Genomic_DNA"/>
</dbReference>
<dbReference type="EMBL" id="CP000644">
    <property type="protein sequence ID" value="ABO88591.1"/>
    <property type="molecule type" value="Genomic_DNA"/>
</dbReference>
<dbReference type="RefSeq" id="WP_005314162.1">
    <property type="nucleotide sequence ID" value="NC_009348.1"/>
</dbReference>
<dbReference type="STRING" id="29491.GCA_000820065_04408"/>
<dbReference type="MEROPS" id="A24.001"/>
<dbReference type="KEGG" id="asa:ASA_0411"/>
<dbReference type="eggNOG" id="COG1989">
    <property type="taxonomic scope" value="Bacteria"/>
</dbReference>
<dbReference type="HOGENOM" id="CLU_057101_0_0_6"/>
<dbReference type="Proteomes" id="UP000000225">
    <property type="component" value="Chromosome"/>
</dbReference>
<dbReference type="GO" id="GO:0005886">
    <property type="term" value="C:plasma membrane"/>
    <property type="evidence" value="ECO:0007669"/>
    <property type="project" value="UniProtKB-SubCell"/>
</dbReference>
<dbReference type="GO" id="GO:0004190">
    <property type="term" value="F:aspartic-type endopeptidase activity"/>
    <property type="evidence" value="ECO:0007669"/>
    <property type="project" value="UniProtKB-EC"/>
</dbReference>
<dbReference type="GO" id="GO:0046872">
    <property type="term" value="F:metal ion binding"/>
    <property type="evidence" value="ECO:0007669"/>
    <property type="project" value="UniProtKB-KW"/>
</dbReference>
<dbReference type="GO" id="GO:0008168">
    <property type="term" value="F:methyltransferase activity"/>
    <property type="evidence" value="ECO:0007669"/>
    <property type="project" value="UniProtKB-KW"/>
</dbReference>
<dbReference type="GO" id="GO:0032259">
    <property type="term" value="P:methylation"/>
    <property type="evidence" value="ECO:0007669"/>
    <property type="project" value="UniProtKB-KW"/>
</dbReference>
<dbReference type="GO" id="GO:0006465">
    <property type="term" value="P:signal peptide processing"/>
    <property type="evidence" value="ECO:0007669"/>
    <property type="project" value="TreeGrafter"/>
</dbReference>
<dbReference type="FunFam" id="1.20.120.1220:FF:000001">
    <property type="entry name" value="Type 4 prepilin-like proteins leader peptide-processing enzyme"/>
    <property type="match status" value="1"/>
</dbReference>
<dbReference type="Gene3D" id="1.20.120.1220">
    <property type="match status" value="1"/>
</dbReference>
<dbReference type="InterPro" id="IPR014032">
    <property type="entry name" value="Peptidase_A24A_bac"/>
</dbReference>
<dbReference type="InterPro" id="IPR000045">
    <property type="entry name" value="Prepilin_IV_endopep_pep"/>
</dbReference>
<dbReference type="InterPro" id="IPR010627">
    <property type="entry name" value="Prepilin_pept_A24_N"/>
</dbReference>
<dbReference type="InterPro" id="IPR050882">
    <property type="entry name" value="Prepilin_peptidase/N-MTase"/>
</dbReference>
<dbReference type="PANTHER" id="PTHR30487:SF0">
    <property type="entry name" value="PREPILIN LEADER PEPTIDASE_N-METHYLTRANSFERASE-RELATED"/>
    <property type="match status" value="1"/>
</dbReference>
<dbReference type="PANTHER" id="PTHR30487">
    <property type="entry name" value="TYPE 4 PREPILIN-LIKE PROTEINS LEADER PEPTIDE-PROCESSING ENZYME"/>
    <property type="match status" value="1"/>
</dbReference>
<dbReference type="Pfam" id="PF06750">
    <property type="entry name" value="A24_N_bact"/>
    <property type="match status" value="1"/>
</dbReference>
<dbReference type="Pfam" id="PF01478">
    <property type="entry name" value="Peptidase_A24"/>
    <property type="match status" value="1"/>
</dbReference>
<dbReference type="PRINTS" id="PR00864">
    <property type="entry name" value="PREPILNPTASE"/>
</dbReference>